<dbReference type="EMBL" id="CR382130">
    <property type="protein sequence ID" value="CAG80449.1"/>
    <property type="molecule type" value="Genomic_DNA"/>
</dbReference>
<dbReference type="RefSeq" id="XP_502263.1">
    <property type="nucleotide sequence ID" value="XM_502263.1"/>
</dbReference>
<dbReference type="SMR" id="Q6CAP9"/>
<dbReference type="FunCoup" id="Q6CAP9">
    <property type="interactions" value="76"/>
</dbReference>
<dbReference type="STRING" id="284591.Q6CAP9"/>
<dbReference type="EnsemblFungi" id="CAG80449">
    <property type="protein sequence ID" value="CAG80449"/>
    <property type="gene ID" value="YALI0_D00935g"/>
</dbReference>
<dbReference type="KEGG" id="yli:2910410"/>
<dbReference type="VEuPathDB" id="FungiDB:YALI0_D00935g"/>
<dbReference type="HOGENOM" id="CLU_710193_0_0_1"/>
<dbReference type="InParanoid" id="Q6CAP9"/>
<dbReference type="OMA" id="LRMITKM"/>
<dbReference type="OrthoDB" id="121802at4891"/>
<dbReference type="Proteomes" id="UP000001300">
    <property type="component" value="Chromosome D"/>
</dbReference>
<dbReference type="GO" id="GO:0005783">
    <property type="term" value="C:endoplasmic reticulum"/>
    <property type="evidence" value="ECO:0000318"/>
    <property type="project" value="GO_Central"/>
</dbReference>
<dbReference type="GO" id="GO:0005789">
    <property type="term" value="C:endoplasmic reticulum membrane"/>
    <property type="evidence" value="ECO:0007669"/>
    <property type="project" value="UniProtKB-SubCell"/>
</dbReference>
<dbReference type="GO" id="GO:0032865">
    <property type="term" value="C:ERMES complex"/>
    <property type="evidence" value="ECO:0000318"/>
    <property type="project" value="GO_Central"/>
</dbReference>
<dbReference type="GO" id="GO:0008289">
    <property type="term" value="F:lipid binding"/>
    <property type="evidence" value="ECO:0000318"/>
    <property type="project" value="GO_Central"/>
</dbReference>
<dbReference type="GO" id="GO:0015917">
    <property type="term" value="P:aminophospholipid transport"/>
    <property type="evidence" value="ECO:0000318"/>
    <property type="project" value="GO_Central"/>
</dbReference>
<dbReference type="GO" id="GO:0120009">
    <property type="term" value="P:intermembrane lipid transfer"/>
    <property type="evidence" value="ECO:0007669"/>
    <property type="project" value="GOC"/>
</dbReference>
<dbReference type="GO" id="GO:0000002">
    <property type="term" value="P:mitochondrial genome maintenance"/>
    <property type="evidence" value="ECO:0007669"/>
    <property type="project" value="UniProtKB-UniRule"/>
</dbReference>
<dbReference type="GO" id="GO:1990456">
    <property type="term" value="P:mitochondrion-endoplasmic reticulum membrane tethering"/>
    <property type="evidence" value="ECO:0000318"/>
    <property type="project" value="GO_Central"/>
</dbReference>
<dbReference type="GO" id="GO:0045040">
    <property type="term" value="P:protein insertion into mitochondrial outer membrane"/>
    <property type="evidence" value="ECO:0007669"/>
    <property type="project" value="UniProtKB-UniRule"/>
</dbReference>
<dbReference type="CDD" id="cd21671">
    <property type="entry name" value="SMP_Mmm1"/>
    <property type="match status" value="1"/>
</dbReference>
<dbReference type="HAMAP" id="MF_03103">
    <property type="entry name" value="Mmm1"/>
    <property type="match status" value="1"/>
</dbReference>
<dbReference type="InterPro" id="IPR027537">
    <property type="entry name" value="Mmm1"/>
</dbReference>
<dbReference type="InterPro" id="IPR019411">
    <property type="entry name" value="MMM1_dom"/>
</dbReference>
<dbReference type="InterPro" id="IPR031468">
    <property type="entry name" value="SMP_LBD"/>
</dbReference>
<dbReference type="PANTHER" id="PTHR13466:SF0">
    <property type="entry name" value="SMP-LTD DOMAIN-CONTAINING PROTEIN"/>
    <property type="match status" value="1"/>
</dbReference>
<dbReference type="PANTHER" id="PTHR13466">
    <property type="entry name" value="TEX2 PROTEIN-RELATED"/>
    <property type="match status" value="1"/>
</dbReference>
<dbReference type="Pfam" id="PF10296">
    <property type="entry name" value="MMM1"/>
    <property type="match status" value="1"/>
</dbReference>
<dbReference type="PROSITE" id="PS51847">
    <property type="entry name" value="SMP"/>
    <property type="match status" value="1"/>
</dbReference>
<proteinExistence type="inferred from homology"/>
<name>MMM11_YARLI</name>
<accession>Q6CAP9</accession>
<feature type="chain" id="PRO_0000384261" description="Maintenance of mitochondrial morphology protein 1-1">
    <location>
        <begin position="1"/>
        <end position="389"/>
    </location>
</feature>
<feature type="topological domain" description="Lumenal" evidence="1">
    <location>
        <begin position="1"/>
        <end position="22"/>
    </location>
</feature>
<feature type="transmembrane region" description="Helical" evidence="1">
    <location>
        <begin position="23"/>
        <end position="43"/>
    </location>
</feature>
<feature type="topological domain" description="Cytoplasmic" evidence="1">
    <location>
        <begin position="44"/>
        <end position="389"/>
    </location>
</feature>
<feature type="domain" description="SMP-LTD" evidence="1">
    <location>
        <begin position="83"/>
        <end position="278"/>
    </location>
</feature>
<feature type="region of interest" description="Disordered" evidence="2">
    <location>
        <begin position="283"/>
        <end position="345"/>
    </location>
</feature>
<feature type="region of interest" description="Disordered" evidence="2">
    <location>
        <begin position="360"/>
        <end position="389"/>
    </location>
</feature>
<feature type="compositionally biased region" description="Polar residues" evidence="2">
    <location>
        <begin position="330"/>
        <end position="341"/>
    </location>
</feature>
<comment type="function">
    <text evidence="1">Component of the ERMES/MDM complex, which serves as a molecular tether to connect the endoplasmic reticulum (ER) and mitochondria. Components of this complex are involved in the control of mitochondrial shape and protein biogenesis, and function in nonvesicular lipid trafficking between the ER and mitochondria. The MDM12-MMM11 subcomplex functions in the major beta-barrel assembly pathway that is responsible for biogenesis of all outer membrane beta-barrel proteins, and acts in a late step after the SAM complex. The MDM10-MDM12-MMM1 subcomplex further acts in the TOM40-specific pathway after the action of the MDM12-MMM1 complex. Essential for establishing and maintaining the structure of mitochondria and maintenance of mtDNA nucleoids.</text>
</comment>
<comment type="subunit">
    <text evidence="1">Homodimer. Component of the ER-mitochondria encounter structure (ERMES) or MDM complex, composed of MMM1, MDM10, MDM12 and MDM34. A MMM1 homodimer associates with one molecule of MDM12 on each side in a pairwise head-to-tail manner, and the SMP-LTD domains of MMM1 and MDM12 generate a continuous hydrophobic tunnel for phospholipid trafficking.</text>
</comment>
<comment type="subcellular location">
    <subcellularLocation>
        <location evidence="1">Endoplasmic reticulum membrane</location>
        <topology evidence="1">Single-pass type I membrane protein</topology>
    </subcellularLocation>
    <text evidence="1">The ERMES/MDM complex localizes to a few discrete foci (around 10 per single cell), that represent mitochondria-endoplasmic reticulum junctions. These foci are often found next to mtDNA nucleoids.</text>
</comment>
<comment type="domain">
    <text evidence="1">The SMP-LTD domain is a barrel-like domain that can bind various types of glycerophospholipids in its interior and mediate their transfer between two adjacent bilayers.</text>
</comment>
<comment type="similarity">
    <text evidence="1">Belongs to the MMM1 family.</text>
</comment>
<protein>
    <recommendedName>
        <fullName evidence="1">Maintenance of mitochondrial morphology protein 1-1</fullName>
    </recommendedName>
</protein>
<reference key="1">
    <citation type="journal article" date="2004" name="Nature">
        <title>Genome evolution in yeasts.</title>
        <authorList>
            <person name="Dujon B."/>
            <person name="Sherman D."/>
            <person name="Fischer G."/>
            <person name="Durrens P."/>
            <person name="Casaregola S."/>
            <person name="Lafontaine I."/>
            <person name="de Montigny J."/>
            <person name="Marck C."/>
            <person name="Neuveglise C."/>
            <person name="Talla E."/>
            <person name="Goffard N."/>
            <person name="Frangeul L."/>
            <person name="Aigle M."/>
            <person name="Anthouard V."/>
            <person name="Babour A."/>
            <person name="Barbe V."/>
            <person name="Barnay S."/>
            <person name="Blanchin S."/>
            <person name="Beckerich J.-M."/>
            <person name="Beyne E."/>
            <person name="Bleykasten C."/>
            <person name="Boisrame A."/>
            <person name="Boyer J."/>
            <person name="Cattolico L."/>
            <person name="Confanioleri F."/>
            <person name="de Daruvar A."/>
            <person name="Despons L."/>
            <person name="Fabre E."/>
            <person name="Fairhead C."/>
            <person name="Ferry-Dumazet H."/>
            <person name="Groppi A."/>
            <person name="Hantraye F."/>
            <person name="Hennequin C."/>
            <person name="Jauniaux N."/>
            <person name="Joyet P."/>
            <person name="Kachouri R."/>
            <person name="Kerrest A."/>
            <person name="Koszul R."/>
            <person name="Lemaire M."/>
            <person name="Lesur I."/>
            <person name="Ma L."/>
            <person name="Muller H."/>
            <person name="Nicaud J.-M."/>
            <person name="Nikolski M."/>
            <person name="Oztas S."/>
            <person name="Ozier-Kalogeropoulos O."/>
            <person name="Pellenz S."/>
            <person name="Potier S."/>
            <person name="Richard G.-F."/>
            <person name="Straub M.-L."/>
            <person name="Suleau A."/>
            <person name="Swennen D."/>
            <person name="Tekaia F."/>
            <person name="Wesolowski-Louvel M."/>
            <person name="Westhof E."/>
            <person name="Wirth B."/>
            <person name="Zeniou-Meyer M."/>
            <person name="Zivanovic Y."/>
            <person name="Bolotin-Fukuhara M."/>
            <person name="Thierry A."/>
            <person name="Bouchier C."/>
            <person name="Caudron B."/>
            <person name="Scarpelli C."/>
            <person name="Gaillardin C."/>
            <person name="Weissenbach J."/>
            <person name="Wincker P."/>
            <person name="Souciet J.-L."/>
        </authorList>
    </citation>
    <scope>NUCLEOTIDE SEQUENCE [LARGE SCALE GENOMIC DNA]</scope>
    <source>
        <strain>CLIB 122 / E 150</strain>
    </source>
</reference>
<keyword id="KW-0256">Endoplasmic reticulum</keyword>
<keyword id="KW-0445">Lipid transport</keyword>
<keyword id="KW-0446">Lipid-binding</keyword>
<keyword id="KW-0472">Membrane</keyword>
<keyword id="KW-1185">Reference proteome</keyword>
<keyword id="KW-0812">Transmembrane</keyword>
<keyword id="KW-1133">Transmembrane helix</keyword>
<keyword id="KW-0813">Transport</keyword>
<evidence type="ECO:0000255" key="1">
    <source>
        <dbReference type="HAMAP-Rule" id="MF_03103"/>
    </source>
</evidence>
<evidence type="ECO:0000256" key="2">
    <source>
        <dbReference type="SAM" id="MobiDB-lite"/>
    </source>
</evidence>
<gene>
    <name evidence="1" type="primary">MMM1-1</name>
    <name type="ordered locus">YALI0D00935g</name>
</gene>
<sequence>MSQFVLPAVASEGIINWPFLTGFMLGQFSVGLVLLIFVRFFIFSDQTEPDINTQRRTAKVLPTGNPSTDAILEKTYYNTKTHQPESLDWFSVLVAQALYQLRDEVRGNDEVLERLNEILKSDKLPGFLDTINVVDLDIGDAFPQFGACKVNKDESGDLEAEIKVSLEDTIKLGVETKMLLNFPIPKFASVPVSLSVSLVKFSGTLTVAIRSAFNSGEANRVLVSFAPDYELQWKIESSVGSTQKLQNAEKISRLIESRIRRWFKDRCVYPEYQQFELPKLWRKTSAPPPSAGAGTGTSTGVPPSPFPQPANPSSVPKPLELPGGFPHRNMSMSSQRPNINNPKFIRSMSVNTRPTYSSSFYEMQGTAGSSSGSAVADEAYRSLQTSPRR</sequence>
<organism>
    <name type="scientific">Yarrowia lipolytica (strain CLIB 122 / E 150)</name>
    <name type="common">Yeast</name>
    <name type="synonym">Candida lipolytica</name>
    <dbReference type="NCBI Taxonomy" id="284591"/>
    <lineage>
        <taxon>Eukaryota</taxon>
        <taxon>Fungi</taxon>
        <taxon>Dikarya</taxon>
        <taxon>Ascomycota</taxon>
        <taxon>Saccharomycotina</taxon>
        <taxon>Dipodascomycetes</taxon>
        <taxon>Dipodascales</taxon>
        <taxon>Dipodascales incertae sedis</taxon>
        <taxon>Yarrowia</taxon>
    </lineage>
</organism>